<keyword id="KW-0067">ATP-binding</keyword>
<keyword id="KW-0131">Cell cycle</keyword>
<keyword id="KW-0132">Cell division</keyword>
<keyword id="KW-0133">Cell shape</keyword>
<keyword id="KW-0961">Cell wall biogenesis/degradation</keyword>
<keyword id="KW-0963">Cytoplasm</keyword>
<keyword id="KW-0436">Ligase</keyword>
<keyword id="KW-0547">Nucleotide-binding</keyword>
<keyword id="KW-0573">Peptidoglycan synthesis</keyword>
<keyword id="KW-1185">Reference proteome</keyword>
<sequence>MTEVTIHQVPEMRRIRRIHFVGIGGAGMSGIAEVLLNQGYEISGSDLRESDVTRRLAGMGVHVFIGHHATNVDGASVVVNSSAVESGNPELMEAREKRIPIVRRAEMLGELMRYRHGIAVAGTHGKTTTTSLISSILAAGKKDPTFIIGGLLNSAGSNAGLGESRYLVAEADESDASFLHLQPMVSVVTNIDADHMDTYEGDFSKLKQTFIDFLHNLPFYGLAVVCGDDPIVTELIPAISRSVVTYGFNEDSDYRAFDVRQDGSKLRFKVARPEGLATLELFLNMPGKHNVLNATAAVAVASEEKVDDDAIQNGLANFMGVGRRFEIYGEFEVGAGPTAMLVDDYGHHPREVAATIAAVRDGWPDRRLVMVYQPHRYSRTRDLYEDFVEVLSTVDQLVLLEVYSAGEDPIPGADSRHLSRTIRTRGVVDPIFVEGVEGVPAVIKDIVQPGDIIITQGAGNVGTLAKELAKRNLG</sequence>
<comment type="function">
    <text evidence="1">Cell wall formation.</text>
</comment>
<comment type="catalytic activity">
    <reaction evidence="1">
        <text>UDP-N-acetyl-alpha-D-muramate + L-alanine + ATP = UDP-N-acetyl-alpha-D-muramoyl-L-alanine + ADP + phosphate + H(+)</text>
        <dbReference type="Rhea" id="RHEA:23372"/>
        <dbReference type="ChEBI" id="CHEBI:15378"/>
        <dbReference type="ChEBI" id="CHEBI:30616"/>
        <dbReference type="ChEBI" id="CHEBI:43474"/>
        <dbReference type="ChEBI" id="CHEBI:57972"/>
        <dbReference type="ChEBI" id="CHEBI:70757"/>
        <dbReference type="ChEBI" id="CHEBI:83898"/>
        <dbReference type="ChEBI" id="CHEBI:456216"/>
        <dbReference type="EC" id="6.3.2.8"/>
    </reaction>
</comment>
<comment type="pathway">
    <text evidence="1">Cell wall biogenesis; peptidoglycan biosynthesis.</text>
</comment>
<comment type="subcellular location">
    <subcellularLocation>
        <location evidence="1">Cytoplasm</location>
    </subcellularLocation>
</comment>
<comment type="similarity">
    <text evidence="1">Belongs to the MurCDEF family.</text>
</comment>
<gene>
    <name evidence="1" type="primary">murC</name>
    <name type="ordered locus">Sde_0849</name>
</gene>
<reference key="1">
    <citation type="journal article" date="2008" name="PLoS Genet.">
        <title>Complete genome sequence of the complex carbohydrate-degrading marine bacterium, Saccharophagus degradans strain 2-40 T.</title>
        <authorList>
            <person name="Weiner R.M."/>
            <person name="Taylor L.E. II"/>
            <person name="Henrissat B."/>
            <person name="Hauser L."/>
            <person name="Land M."/>
            <person name="Coutinho P.M."/>
            <person name="Rancurel C."/>
            <person name="Saunders E.H."/>
            <person name="Longmire A.G."/>
            <person name="Zhang H."/>
            <person name="Bayer E.A."/>
            <person name="Gilbert H.J."/>
            <person name="Larimer F."/>
            <person name="Zhulin I.B."/>
            <person name="Ekborg N.A."/>
            <person name="Lamed R."/>
            <person name="Richardson P.M."/>
            <person name="Borovok I."/>
            <person name="Hutcheson S."/>
        </authorList>
    </citation>
    <scope>NUCLEOTIDE SEQUENCE [LARGE SCALE GENOMIC DNA]</scope>
    <source>
        <strain>2-40 / ATCC 43961 / DSM 17024</strain>
    </source>
</reference>
<name>MURC_SACD2</name>
<evidence type="ECO:0000255" key="1">
    <source>
        <dbReference type="HAMAP-Rule" id="MF_00046"/>
    </source>
</evidence>
<dbReference type="EC" id="6.3.2.8" evidence="1"/>
<dbReference type="EMBL" id="CP000282">
    <property type="protein sequence ID" value="ABD80111.1"/>
    <property type="molecule type" value="Genomic_DNA"/>
</dbReference>
<dbReference type="RefSeq" id="WP_011467332.1">
    <property type="nucleotide sequence ID" value="NC_007912.1"/>
</dbReference>
<dbReference type="SMR" id="Q21MG8"/>
<dbReference type="STRING" id="203122.Sde_0849"/>
<dbReference type="GeneID" id="98612531"/>
<dbReference type="KEGG" id="sde:Sde_0849"/>
<dbReference type="eggNOG" id="COG0773">
    <property type="taxonomic scope" value="Bacteria"/>
</dbReference>
<dbReference type="HOGENOM" id="CLU_028104_2_2_6"/>
<dbReference type="OrthoDB" id="9804126at2"/>
<dbReference type="UniPathway" id="UPA00219"/>
<dbReference type="Proteomes" id="UP000001947">
    <property type="component" value="Chromosome"/>
</dbReference>
<dbReference type="GO" id="GO:0005737">
    <property type="term" value="C:cytoplasm"/>
    <property type="evidence" value="ECO:0007669"/>
    <property type="project" value="UniProtKB-SubCell"/>
</dbReference>
<dbReference type="GO" id="GO:0005524">
    <property type="term" value="F:ATP binding"/>
    <property type="evidence" value="ECO:0007669"/>
    <property type="project" value="UniProtKB-UniRule"/>
</dbReference>
<dbReference type="GO" id="GO:0008763">
    <property type="term" value="F:UDP-N-acetylmuramate-L-alanine ligase activity"/>
    <property type="evidence" value="ECO:0007669"/>
    <property type="project" value="UniProtKB-UniRule"/>
</dbReference>
<dbReference type="GO" id="GO:0051301">
    <property type="term" value="P:cell division"/>
    <property type="evidence" value="ECO:0007669"/>
    <property type="project" value="UniProtKB-KW"/>
</dbReference>
<dbReference type="GO" id="GO:0071555">
    <property type="term" value="P:cell wall organization"/>
    <property type="evidence" value="ECO:0007669"/>
    <property type="project" value="UniProtKB-KW"/>
</dbReference>
<dbReference type="GO" id="GO:0009252">
    <property type="term" value="P:peptidoglycan biosynthetic process"/>
    <property type="evidence" value="ECO:0007669"/>
    <property type="project" value="UniProtKB-UniRule"/>
</dbReference>
<dbReference type="GO" id="GO:0008360">
    <property type="term" value="P:regulation of cell shape"/>
    <property type="evidence" value="ECO:0007669"/>
    <property type="project" value="UniProtKB-KW"/>
</dbReference>
<dbReference type="FunFam" id="3.40.1190.10:FF:000001">
    <property type="entry name" value="UDP-N-acetylmuramate--L-alanine ligase"/>
    <property type="match status" value="1"/>
</dbReference>
<dbReference type="FunFam" id="3.40.50.720:FF:000046">
    <property type="entry name" value="UDP-N-acetylmuramate--L-alanine ligase"/>
    <property type="match status" value="1"/>
</dbReference>
<dbReference type="Gene3D" id="3.90.190.20">
    <property type="entry name" value="Mur ligase, C-terminal domain"/>
    <property type="match status" value="1"/>
</dbReference>
<dbReference type="Gene3D" id="3.40.1190.10">
    <property type="entry name" value="Mur-like, catalytic domain"/>
    <property type="match status" value="1"/>
</dbReference>
<dbReference type="Gene3D" id="3.40.50.720">
    <property type="entry name" value="NAD(P)-binding Rossmann-like Domain"/>
    <property type="match status" value="1"/>
</dbReference>
<dbReference type="HAMAP" id="MF_00046">
    <property type="entry name" value="MurC"/>
    <property type="match status" value="1"/>
</dbReference>
<dbReference type="InterPro" id="IPR036565">
    <property type="entry name" value="Mur-like_cat_sf"/>
</dbReference>
<dbReference type="InterPro" id="IPR004101">
    <property type="entry name" value="Mur_ligase_C"/>
</dbReference>
<dbReference type="InterPro" id="IPR036615">
    <property type="entry name" value="Mur_ligase_C_dom_sf"/>
</dbReference>
<dbReference type="InterPro" id="IPR013221">
    <property type="entry name" value="Mur_ligase_cen"/>
</dbReference>
<dbReference type="InterPro" id="IPR000713">
    <property type="entry name" value="Mur_ligase_N"/>
</dbReference>
<dbReference type="InterPro" id="IPR050061">
    <property type="entry name" value="MurCDEF_pg_biosynth"/>
</dbReference>
<dbReference type="InterPro" id="IPR005758">
    <property type="entry name" value="UDP-N-AcMur_Ala_ligase_MurC"/>
</dbReference>
<dbReference type="NCBIfam" id="TIGR01082">
    <property type="entry name" value="murC"/>
    <property type="match status" value="1"/>
</dbReference>
<dbReference type="PANTHER" id="PTHR43445:SF3">
    <property type="entry name" value="UDP-N-ACETYLMURAMATE--L-ALANINE LIGASE"/>
    <property type="match status" value="1"/>
</dbReference>
<dbReference type="PANTHER" id="PTHR43445">
    <property type="entry name" value="UDP-N-ACETYLMURAMATE--L-ALANINE LIGASE-RELATED"/>
    <property type="match status" value="1"/>
</dbReference>
<dbReference type="Pfam" id="PF01225">
    <property type="entry name" value="Mur_ligase"/>
    <property type="match status" value="1"/>
</dbReference>
<dbReference type="Pfam" id="PF02875">
    <property type="entry name" value="Mur_ligase_C"/>
    <property type="match status" value="1"/>
</dbReference>
<dbReference type="Pfam" id="PF08245">
    <property type="entry name" value="Mur_ligase_M"/>
    <property type="match status" value="1"/>
</dbReference>
<dbReference type="SUPFAM" id="SSF51984">
    <property type="entry name" value="MurCD N-terminal domain"/>
    <property type="match status" value="1"/>
</dbReference>
<dbReference type="SUPFAM" id="SSF53623">
    <property type="entry name" value="MurD-like peptide ligases, catalytic domain"/>
    <property type="match status" value="1"/>
</dbReference>
<dbReference type="SUPFAM" id="SSF53244">
    <property type="entry name" value="MurD-like peptide ligases, peptide-binding domain"/>
    <property type="match status" value="1"/>
</dbReference>
<feature type="chain" id="PRO_0000242591" description="UDP-N-acetylmuramate--L-alanine ligase">
    <location>
        <begin position="1"/>
        <end position="474"/>
    </location>
</feature>
<feature type="binding site" evidence="1">
    <location>
        <begin position="122"/>
        <end position="128"/>
    </location>
    <ligand>
        <name>ATP</name>
        <dbReference type="ChEBI" id="CHEBI:30616"/>
    </ligand>
</feature>
<organism>
    <name type="scientific">Saccharophagus degradans (strain 2-40 / ATCC 43961 / DSM 17024)</name>
    <dbReference type="NCBI Taxonomy" id="203122"/>
    <lineage>
        <taxon>Bacteria</taxon>
        <taxon>Pseudomonadati</taxon>
        <taxon>Pseudomonadota</taxon>
        <taxon>Gammaproteobacteria</taxon>
        <taxon>Cellvibrionales</taxon>
        <taxon>Cellvibrionaceae</taxon>
        <taxon>Saccharophagus</taxon>
    </lineage>
</organism>
<accession>Q21MG8</accession>
<protein>
    <recommendedName>
        <fullName evidence="1">UDP-N-acetylmuramate--L-alanine ligase</fullName>
        <ecNumber evidence="1">6.3.2.8</ecNumber>
    </recommendedName>
    <alternativeName>
        <fullName evidence="1">UDP-N-acetylmuramoyl-L-alanine synthetase</fullName>
    </alternativeName>
</protein>
<proteinExistence type="inferred from homology"/>